<organismHost>
    <name type="scientific">Bos taurus</name>
    <name type="common">Bovine</name>
    <dbReference type="NCBI Taxonomy" id="9913"/>
</organismHost>
<comment type="function">
    <text evidence="2">Part of the DNA-dependent RNA polymerase which catalyzes the transcription of viral DNA into RNA using the four ribonucleoside triphosphates as substrates. Responsible for the transcription of early, intermediate and late genes. DNA-dependent RNA polymerase associates with the early transcription factor (ETF), itself composed of OPG118 and OPG133, thereby allowing the early genes transcription. Late transcription, and probably also intermediate transcription, require newly synthesized RNA polymerase.</text>
</comment>
<comment type="catalytic activity">
    <reaction>
        <text>RNA(n) + a ribonucleoside 5'-triphosphate = RNA(n+1) + diphosphate</text>
        <dbReference type="Rhea" id="RHEA:21248"/>
        <dbReference type="Rhea" id="RHEA-COMP:14527"/>
        <dbReference type="Rhea" id="RHEA-COMP:17342"/>
        <dbReference type="ChEBI" id="CHEBI:33019"/>
        <dbReference type="ChEBI" id="CHEBI:61557"/>
        <dbReference type="ChEBI" id="CHEBI:140395"/>
        <dbReference type="EC" id="2.7.7.6"/>
    </reaction>
</comment>
<comment type="subunit">
    <text evidence="1">The DNA-dependent RNA polymerase used for intermediate and late genes expression consists of eight subunits Rpo30/OPG66, Rpo7/OPG90, Rpo22/OPG103, Rpo147/OPG105, Rpo18/OPG119, Rpo19/OPG131, Rpo132/OPG151 and Rpo35/OPG156. The same holoenzyme, with the addition of the transcription-specificity factor OPG109, is used for early gene expression.</text>
</comment>
<comment type="subcellular location">
    <subcellularLocation>
        <location evidence="4">Virion</location>
    </subcellularLocation>
    <text>All the enzymes and other proteins required to synthesize early mRNAs are packaged within the virion core along with the DNA genome. This is necessary because viral early mRNAs are synthesized within minutes after virus entry into the cell and are extruded through pores in the core particle.</text>
</comment>
<comment type="induction">
    <text evidence="3">Expressed in the early phase of the viral replicative cycle.</text>
</comment>
<comment type="similarity">
    <text evidence="4">Belongs to the poxviridae DNA-directed RNA polymerase 18 kDa subunit family.</text>
</comment>
<feature type="chain" id="PRO_0000099152" description="DNA-directed RNA polymerase 18 kDa subunit">
    <location>
        <begin position="1"/>
        <end position="161"/>
    </location>
</feature>
<accession>P04310</accession>
<protein>
    <recommendedName>
        <fullName>DNA-directed RNA polymerase 18 kDa subunit</fullName>
        <ecNumber>2.7.7.6</ecNumber>
    </recommendedName>
</protein>
<proteinExistence type="evidence at protein level"/>
<organism>
    <name type="scientific">Vaccinia virus (strain Western Reserve)</name>
    <name type="common">VACV</name>
    <name type="synonym">Vaccinia virus (strain WR)</name>
    <dbReference type="NCBI Taxonomy" id="10254"/>
    <lineage>
        <taxon>Viruses</taxon>
        <taxon>Varidnaviria</taxon>
        <taxon>Bamfordvirae</taxon>
        <taxon>Nucleocytoviricota</taxon>
        <taxon>Pokkesviricetes</taxon>
        <taxon>Chitovirales</taxon>
        <taxon>Poxviridae</taxon>
        <taxon>Chordopoxvirinae</taxon>
        <taxon>Orthopoxvirus</taxon>
        <taxon>Vaccinia virus</taxon>
    </lineage>
</organism>
<reference key="1">
    <citation type="journal article" date="1986" name="Virology">
        <title>Nucleotide sequence and genetic map of the 16-kb vaccinia virus HindIII D fragment.</title>
        <authorList>
            <person name="Niles E.G."/>
            <person name="Condit R.C."/>
            <person name="Caro P."/>
            <person name="Davidson K."/>
            <person name="Matusick L."/>
            <person name="Seto J."/>
        </authorList>
    </citation>
    <scope>NUCLEOTIDE SEQUENCE [GENOMIC DNA]</scope>
</reference>
<reference key="2">
    <citation type="submission" date="2003-02" db="EMBL/GenBank/DDBJ databases">
        <title>Sequencing of the coding region of Vaccinia-WR to an average 9-fold redundancy and an error rate of 0.16/10kb.</title>
        <authorList>
            <person name="Esposito J.J."/>
            <person name="Frace A.M."/>
            <person name="Sammons S.A."/>
            <person name="Olsen-Rasmussen M."/>
            <person name="Osborne J."/>
            <person name="Wohlhueter R."/>
        </authorList>
    </citation>
    <scope>NUCLEOTIDE SEQUENCE [LARGE SCALE GENOMIC DNA]</scope>
</reference>
<reference key="3">
    <citation type="journal article" date="1990" name="J. Virol.">
        <title>Identification of the vaccinia virus gene encoding an 18-kilodalton subunit of RNA polymerase and demonstration of a 5' poly(A) leader on its early transcript.</title>
        <authorList>
            <person name="Ahn B.Y."/>
            <person name="Jones E.V."/>
            <person name="Moss B."/>
        </authorList>
    </citation>
    <scope>IDENTIFICATION</scope>
    <scope>INDUCTION</scope>
</reference>
<reference key="4">
    <citation type="journal article" date="2003" name="J. Gen. Virol.">
        <title>Vaccinia virus transcription.</title>
        <authorList>
            <person name="Broyles S.S."/>
        </authorList>
    </citation>
    <scope>REVIEW</scope>
</reference>
<reference key="5">
    <citation type="journal article" date="2009" name="J. Virol.">
        <title>Interaction of the vaccinia virus RNA polymerase-associated 94-kilodalton protein with the early transcription factor.</title>
        <authorList>
            <person name="Yang Z."/>
            <person name="Moss B."/>
        </authorList>
    </citation>
    <scope>FUNCTION</scope>
</reference>
<gene>
    <name type="primary">OPG119</name>
    <name type="synonym">RPO18</name>
    <name type="ordered locus">VACWR112</name>
    <name type="ORF">D7R</name>
</gene>
<dbReference type="EC" id="2.7.7.6"/>
<dbReference type="EMBL" id="M15058">
    <property type="protein sequence ID" value="AAA48263.1"/>
    <property type="molecule type" value="Genomic_DNA"/>
</dbReference>
<dbReference type="EMBL" id="AY243312">
    <property type="protein sequence ID" value="AAO89391.1"/>
    <property type="molecule type" value="Genomic_DNA"/>
</dbReference>
<dbReference type="PIR" id="A03884">
    <property type="entry name" value="QQVZ13"/>
</dbReference>
<dbReference type="RefSeq" id="YP_232994.1">
    <property type="nucleotide sequence ID" value="NC_006998.1"/>
</dbReference>
<dbReference type="PDB" id="8C8H">
    <property type="method" value="EM"/>
    <property type="resolution" value="3.84 A"/>
    <property type="chains" value="G=1-161"/>
</dbReference>
<dbReference type="PDBsum" id="8C8H"/>
<dbReference type="EMDB" id="EMD-16476"/>
<dbReference type="SMR" id="P04310"/>
<dbReference type="DIP" id="DIP-2165N"/>
<dbReference type="IntAct" id="P04310">
    <property type="interactions" value="1"/>
</dbReference>
<dbReference type="MINT" id="P04310"/>
<dbReference type="DNASU" id="3707568"/>
<dbReference type="GeneID" id="3707568"/>
<dbReference type="KEGG" id="vg:3707568"/>
<dbReference type="Proteomes" id="UP000000344">
    <property type="component" value="Genome"/>
</dbReference>
<dbReference type="GO" id="GO:0000428">
    <property type="term" value="C:DNA-directed RNA polymerase complex"/>
    <property type="evidence" value="ECO:0007669"/>
    <property type="project" value="UniProtKB-KW"/>
</dbReference>
<dbReference type="GO" id="GO:0044423">
    <property type="term" value="C:virion component"/>
    <property type="evidence" value="ECO:0007669"/>
    <property type="project" value="UniProtKB-KW"/>
</dbReference>
<dbReference type="GO" id="GO:0003677">
    <property type="term" value="F:DNA binding"/>
    <property type="evidence" value="ECO:0007669"/>
    <property type="project" value="InterPro"/>
</dbReference>
<dbReference type="GO" id="GO:0003899">
    <property type="term" value="F:DNA-directed RNA polymerase activity"/>
    <property type="evidence" value="ECO:0007669"/>
    <property type="project" value="UniProtKB-EC"/>
</dbReference>
<dbReference type="GO" id="GO:0019083">
    <property type="term" value="P:viral transcription"/>
    <property type="evidence" value="ECO:0007669"/>
    <property type="project" value="InterPro"/>
</dbReference>
<dbReference type="InterPro" id="IPR004973">
    <property type="entry name" value="DNA-dir_RNA_pol_18kDa_poxviral"/>
</dbReference>
<dbReference type="Pfam" id="PF03293">
    <property type="entry name" value="Pox_RNA_pol"/>
    <property type="match status" value="1"/>
</dbReference>
<name>RP18_VACCW</name>
<sequence>MSSFVTNGYLPVTLEPHELTLDIKTNIRNAVYKTYLHREISGKMAKKIEIREDVELPLGEIVNNSVVINVPCVITYAYYHVGDIVRGTLNIEDESNVTIQCGDLICKLSRDSGTVSFSDSKYCFFRNGNAYDNGSEVTAVLMEAQQGIESSFVFLANIVDS</sequence>
<keyword id="KW-0002">3D-structure</keyword>
<keyword id="KW-0240">DNA-directed RNA polymerase</keyword>
<keyword id="KW-0244">Early protein</keyword>
<keyword id="KW-0548">Nucleotidyltransferase</keyword>
<keyword id="KW-1185">Reference proteome</keyword>
<keyword id="KW-0804">Transcription</keyword>
<keyword id="KW-0808">Transferase</keyword>
<keyword id="KW-0946">Virion</keyword>
<evidence type="ECO:0000250" key="1">
    <source>
        <dbReference type="UniProtKB" id="Q76ZS0"/>
    </source>
</evidence>
<evidence type="ECO:0000269" key="2">
    <source>
    </source>
</evidence>
<evidence type="ECO:0000269" key="3">
    <source>
    </source>
</evidence>
<evidence type="ECO:0000305" key="4"/>